<protein>
    <recommendedName>
        <fullName evidence="4">Protein transport protein Sec23B</fullName>
    </recommendedName>
    <alternativeName>
        <fullName>SEC23-related protein B</fullName>
    </alternativeName>
</protein>
<gene>
    <name evidence="5" type="primary">Sec23b</name>
</gene>
<dbReference type="EMBL" id="AK014597">
    <property type="protein sequence ID" value="BAB29452.1"/>
    <property type="molecule type" value="mRNA"/>
</dbReference>
<dbReference type="EMBL" id="AK149693">
    <property type="protein sequence ID" value="BAE29030.1"/>
    <property type="molecule type" value="mRNA"/>
</dbReference>
<dbReference type="EMBL" id="AK153214">
    <property type="protein sequence ID" value="BAE31812.1"/>
    <property type="molecule type" value="mRNA"/>
</dbReference>
<dbReference type="EMBL" id="AK166330">
    <property type="protein sequence ID" value="BAE38710.1"/>
    <property type="molecule type" value="mRNA"/>
</dbReference>
<dbReference type="EMBL" id="AF200326">
    <property type="protein sequence ID" value="AAF08301.1"/>
    <property type="molecule type" value="mRNA"/>
</dbReference>
<dbReference type="EMBL" id="AL808119">
    <property type="status" value="NOT_ANNOTATED_CDS"/>
    <property type="molecule type" value="Genomic_DNA"/>
</dbReference>
<dbReference type="EMBL" id="BC005464">
    <property type="protein sequence ID" value="AAH05464.1"/>
    <property type="molecule type" value="mRNA"/>
</dbReference>
<dbReference type="EMBL" id="BC011160">
    <property type="protein sequence ID" value="AAH11160.1"/>
    <property type="molecule type" value="mRNA"/>
</dbReference>
<dbReference type="CCDS" id="CCDS16822.1"/>
<dbReference type="RefSeq" id="NP_001239472.1">
    <property type="nucleotide sequence ID" value="NM_001252543.2"/>
</dbReference>
<dbReference type="RefSeq" id="NP_001239473.1">
    <property type="nucleotide sequence ID" value="NM_001252544.2"/>
</dbReference>
<dbReference type="RefSeq" id="NP_001239474.1">
    <property type="nucleotide sequence ID" value="NM_001252545.2"/>
</dbReference>
<dbReference type="RefSeq" id="NP_001342308.1">
    <property type="nucleotide sequence ID" value="NM_001355379.2"/>
</dbReference>
<dbReference type="RefSeq" id="NP_001342309.1">
    <property type="nucleotide sequence ID" value="NM_001355380.2"/>
</dbReference>
<dbReference type="RefSeq" id="NP_062761.2">
    <property type="nucleotide sequence ID" value="NM_019787.4"/>
</dbReference>
<dbReference type="RefSeq" id="XP_017174388.1">
    <property type="nucleotide sequence ID" value="XM_017318899.1"/>
</dbReference>
<dbReference type="SMR" id="Q9D662"/>
<dbReference type="BioGRID" id="205109">
    <property type="interactions" value="11"/>
</dbReference>
<dbReference type="FunCoup" id="Q9D662">
    <property type="interactions" value="3483"/>
</dbReference>
<dbReference type="STRING" id="10090.ENSMUSP00000028916"/>
<dbReference type="GlyGen" id="Q9D662">
    <property type="glycosylation" value="2 sites, 1 N-linked glycan (1 site), 1 O-linked glycan (1 site)"/>
</dbReference>
<dbReference type="iPTMnet" id="Q9D662"/>
<dbReference type="PhosphoSitePlus" id="Q9D662"/>
<dbReference type="SwissPalm" id="Q9D662"/>
<dbReference type="jPOST" id="Q9D662"/>
<dbReference type="PaxDb" id="10090-ENSMUSP00000028916"/>
<dbReference type="ProteomicsDB" id="255465"/>
<dbReference type="Pumba" id="Q9D662"/>
<dbReference type="Antibodypedia" id="1407">
    <property type="antibodies" value="195 antibodies from 25 providers"/>
</dbReference>
<dbReference type="DNASU" id="27054"/>
<dbReference type="Ensembl" id="ENSMUST00000028916.15">
    <property type="protein sequence ID" value="ENSMUSP00000028916.9"/>
    <property type="gene ID" value="ENSMUSG00000027429.17"/>
</dbReference>
<dbReference type="GeneID" id="27054"/>
<dbReference type="KEGG" id="mmu:27054"/>
<dbReference type="UCSC" id="uc008mrj.2">
    <property type="organism name" value="mouse"/>
</dbReference>
<dbReference type="AGR" id="MGI:1350925"/>
<dbReference type="CTD" id="10483"/>
<dbReference type="MGI" id="MGI:1350925">
    <property type="gene designation" value="Sec23b"/>
</dbReference>
<dbReference type="VEuPathDB" id="HostDB:ENSMUSG00000027429"/>
<dbReference type="eggNOG" id="KOG1986">
    <property type="taxonomic scope" value="Eukaryota"/>
</dbReference>
<dbReference type="GeneTree" id="ENSGT00390000006916"/>
<dbReference type="HOGENOM" id="CLU_008658_3_0_1"/>
<dbReference type="InParanoid" id="Q9D662"/>
<dbReference type="OMA" id="MPWNIIP"/>
<dbReference type="OrthoDB" id="10256289at2759"/>
<dbReference type="PhylomeDB" id="Q9D662"/>
<dbReference type="TreeFam" id="TF300693"/>
<dbReference type="BioGRID-ORCS" id="27054">
    <property type="hits" value="11 hits in 80 CRISPR screens"/>
</dbReference>
<dbReference type="ChiTaRS" id="Sec23b">
    <property type="organism name" value="mouse"/>
</dbReference>
<dbReference type="PRO" id="PR:Q9D662"/>
<dbReference type="Proteomes" id="UP000000589">
    <property type="component" value="Chromosome 2"/>
</dbReference>
<dbReference type="RNAct" id="Q9D662">
    <property type="molecule type" value="protein"/>
</dbReference>
<dbReference type="Bgee" id="ENSMUSG00000027429">
    <property type="expression patterns" value="Expressed in submandibular gland and 253 other cell types or tissues"/>
</dbReference>
<dbReference type="ExpressionAtlas" id="Q9D662">
    <property type="expression patterns" value="baseline and differential"/>
</dbReference>
<dbReference type="GO" id="GO:0030127">
    <property type="term" value="C:COPII vesicle coat"/>
    <property type="evidence" value="ECO:0007669"/>
    <property type="project" value="InterPro"/>
</dbReference>
<dbReference type="GO" id="GO:0005829">
    <property type="term" value="C:cytosol"/>
    <property type="evidence" value="ECO:0007669"/>
    <property type="project" value="UniProtKB-SubCell"/>
</dbReference>
<dbReference type="GO" id="GO:0012505">
    <property type="term" value="C:endomembrane system"/>
    <property type="evidence" value="ECO:0000266"/>
    <property type="project" value="MGI"/>
</dbReference>
<dbReference type="GO" id="GO:0005783">
    <property type="term" value="C:endoplasmic reticulum"/>
    <property type="evidence" value="ECO:0000250"/>
    <property type="project" value="UniProtKB"/>
</dbReference>
<dbReference type="GO" id="GO:0005789">
    <property type="term" value="C:endoplasmic reticulum membrane"/>
    <property type="evidence" value="ECO:0007669"/>
    <property type="project" value="UniProtKB-SubCell"/>
</dbReference>
<dbReference type="GO" id="GO:0048471">
    <property type="term" value="C:perinuclear region of cytoplasm"/>
    <property type="evidence" value="ECO:0000314"/>
    <property type="project" value="MGI"/>
</dbReference>
<dbReference type="GO" id="GO:0008270">
    <property type="term" value="F:zinc ion binding"/>
    <property type="evidence" value="ECO:0007669"/>
    <property type="project" value="InterPro"/>
</dbReference>
<dbReference type="GO" id="GO:0090114">
    <property type="term" value="P:COPII-coated vesicle budding"/>
    <property type="evidence" value="ECO:0007669"/>
    <property type="project" value="InterPro"/>
</dbReference>
<dbReference type="GO" id="GO:0006886">
    <property type="term" value="P:intracellular protein transport"/>
    <property type="evidence" value="ECO:0007669"/>
    <property type="project" value="InterPro"/>
</dbReference>
<dbReference type="CDD" id="cd01478">
    <property type="entry name" value="Sec23-like"/>
    <property type="match status" value="1"/>
</dbReference>
<dbReference type="CDD" id="cd11287">
    <property type="entry name" value="Sec23_C"/>
    <property type="match status" value="1"/>
</dbReference>
<dbReference type="FunFam" id="1.20.120.730:FF:000003">
    <property type="entry name" value="Protein transport protein SEC23"/>
    <property type="match status" value="1"/>
</dbReference>
<dbReference type="FunFam" id="2.30.30.380:FF:000001">
    <property type="entry name" value="Protein transport protein SEC23"/>
    <property type="match status" value="1"/>
</dbReference>
<dbReference type="FunFam" id="2.60.40.1670:FF:000006">
    <property type="entry name" value="Protein transport protein SEC23"/>
    <property type="match status" value="1"/>
</dbReference>
<dbReference type="FunFam" id="3.40.20.10:FF:000003">
    <property type="entry name" value="Protein transport protein SEC23"/>
    <property type="match status" value="1"/>
</dbReference>
<dbReference type="FunFam" id="3.40.50.410:FF:000011">
    <property type="entry name" value="Protein transport protein SEC23"/>
    <property type="match status" value="1"/>
</dbReference>
<dbReference type="Gene3D" id="2.60.40.1670">
    <property type="entry name" value="beta-sandwich domain of Sec23/24"/>
    <property type="match status" value="1"/>
</dbReference>
<dbReference type="Gene3D" id="1.20.120.730">
    <property type="entry name" value="Sec23/Sec24 helical domain"/>
    <property type="match status" value="1"/>
</dbReference>
<dbReference type="Gene3D" id="3.40.20.10">
    <property type="entry name" value="Severin"/>
    <property type="match status" value="1"/>
</dbReference>
<dbReference type="Gene3D" id="3.40.50.410">
    <property type="entry name" value="von Willebrand factor, type A domain"/>
    <property type="match status" value="1"/>
</dbReference>
<dbReference type="Gene3D" id="2.30.30.380">
    <property type="entry name" value="Zn-finger domain of Sec23/24"/>
    <property type="match status" value="1"/>
</dbReference>
<dbReference type="InterPro" id="IPR029006">
    <property type="entry name" value="ADF-H/Gelsolin-like_dom_sf"/>
</dbReference>
<dbReference type="InterPro" id="IPR007123">
    <property type="entry name" value="Gelsolin-like_dom"/>
</dbReference>
<dbReference type="InterPro" id="IPR036180">
    <property type="entry name" value="Gelsolin-like_dom_sf"/>
</dbReference>
<dbReference type="InterPro" id="IPR037364">
    <property type="entry name" value="Sec23"/>
</dbReference>
<dbReference type="InterPro" id="IPR006900">
    <property type="entry name" value="Sec23/24_helical_dom"/>
</dbReference>
<dbReference type="InterPro" id="IPR036175">
    <property type="entry name" value="Sec23/24_helical_dom_sf"/>
</dbReference>
<dbReference type="InterPro" id="IPR006896">
    <property type="entry name" value="Sec23/24_trunk_dom"/>
</dbReference>
<dbReference type="InterPro" id="IPR012990">
    <property type="entry name" value="Sec23_24_beta_S"/>
</dbReference>
<dbReference type="InterPro" id="IPR037550">
    <property type="entry name" value="Sec23_C"/>
</dbReference>
<dbReference type="InterPro" id="IPR036465">
    <property type="entry name" value="vWFA_dom_sf"/>
</dbReference>
<dbReference type="InterPro" id="IPR006895">
    <property type="entry name" value="Znf_Sec23_Sec24"/>
</dbReference>
<dbReference type="InterPro" id="IPR036174">
    <property type="entry name" value="Znf_Sec23_Sec24_sf"/>
</dbReference>
<dbReference type="PANTHER" id="PTHR11141">
    <property type="entry name" value="PROTEIN TRANSPORT PROTEIN SEC23"/>
    <property type="match status" value="1"/>
</dbReference>
<dbReference type="PANTHER" id="PTHR11141:SF10">
    <property type="entry name" value="PROTEIN TRANSPORT PROTEIN SEC23B"/>
    <property type="match status" value="1"/>
</dbReference>
<dbReference type="Pfam" id="PF00626">
    <property type="entry name" value="Gelsolin"/>
    <property type="match status" value="1"/>
</dbReference>
<dbReference type="Pfam" id="PF08033">
    <property type="entry name" value="Sec23_BS"/>
    <property type="match status" value="1"/>
</dbReference>
<dbReference type="Pfam" id="PF04815">
    <property type="entry name" value="Sec23_helical"/>
    <property type="match status" value="1"/>
</dbReference>
<dbReference type="Pfam" id="PF04811">
    <property type="entry name" value="Sec23_trunk"/>
    <property type="match status" value="1"/>
</dbReference>
<dbReference type="Pfam" id="PF04810">
    <property type="entry name" value="zf-Sec23_Sec24"/>
    <property type="match status" value="1"/>
</dbReference>
<dbReference type="SUPFAM" id="SSF81995">
    <property type="entry name" value="beta-sandwich domain of Sec23/24"/>
    <property type="match status" value="1"/>
</dbReference>
<dbReference type="SUPFAM" id="SSF82754">
    <property type="entry name" value="C-terminal, gelsolin-like domain of Sec23/24"/>
    <property type="match status" value="1"/>
</dbReference>
<dbReference type="SUPFAM" id="SSF81811">
    <property type="entry name" value="Helical domain of Sec23/24"/>
    <property type="match status" value="1"/>
</dbReference>
<dbReference type="SUPFAM" id="SSF53300">
    <property type="entry name" value="vWA-like"/>
    <property type="match status" value="1"/>
</dbReference>
<dbReference type="SUPFAM" id="SSF82919">
    <property type="entry name" value="Zn-finger domain of Sec23/24"/>
    <property type="match status" value="1"/>
</dbReference>
<organism>
    <name type="scientific">Mus musculus</name>
    <name type="common">Mouse</name>
    <dbReference type="NCBI Taxonomy" id="10090"/>
    <lineage>
        <taxon>Eukaryota</taxon>
        <taxon>Metazoa</taxon>
        <taxon>Chordata</taxon>
        <taxon>Craniata</taxon>
        <taxon>Vertebrata</taxon>
        <taxon>Euteleostomi</taxon>
        <taxon>Mammalia</taxon>
        <taxon>Eutheria</taxon>
        <taxon>Euarchontoglires</taxon>
        <taxon>Glires</taxon>
        <taxon>Rodentia</taxon>
        <taxon>Myomorpha</taxon>
        <taxon>Muroidea</taxon>
        <taxon>Muridae</taxon>
        <taxon>Murinae</taxon>
        <taxon>Mus</taxon>
        <taxon>Mus</taxon>
    </lineage>
</organism>
<proteinExistence type="evidence at protein level"/>
<reference key="1">
    <citation type="submission" date="1999-10" db="EMBL/GenBank/DDBJ databases">
        <authorList>
            <person name="Low D.Y.H."/>
            <person name="Tang B.L."/>
            <person name="Hong W.J."/>
        </authorList>
    </citation>
    <scope>NUCLEOTIDE SEQUENCE [MRNA]</scope>
</reference>
<reference key="2">
    <citation type="journal article" date="2005" name="Science">
        <title>The transcriptional landscape of the mammalian genome.</title>
        <authorList>
            <person name="Carninci P."/>
            <person name="Kasukawa T."/>
            <person name="Katayama S."/>
            <person name="Gough J."/>
            <person name="Frith M.C."/>
            <person name="Maeda N."/>
            <person name="Oyama R."/>
            <person name="Ravasi T."/>
            <person name="Lenhard B."/>
            <person name="Wells C."/>
            <person name="Kodzius R."/>
            <person name="Shimokawa K."/>
            <person name="Bajic V.B."/>
            <person name="Brenner S.E."/>
            <person name="Batalov S."/>
            <person name="Forrest A.R."/>
            <person name="Zavolan M."/>
            <person name="Davis M.J."/>
            <person name="Wilming L.G."/>
            <person name="Aidinis V."/>
            <person name="Allen J.E."/>
            <person name="Ambesi-Impiombato A."/>
            <person name="Apweiler R."/>
            <person name="Aturaliya R.N."/>
            <person name="Bailey T.L."/>
            <person name="Bansal M."/>
            <person name="Baxter L."/>
            <person name="Beisel K.W."/>
            <person name="Bersano T."/>
            <person name="Bono H."/>
            <person name="Chalk A.M."/>
            <person name="Chiu K.P."/>
            <person name="Choudhary V."/>
            <person name="Christoffels A."/>
            <person name="Clutterbuck D.R."/>
            <person name="Crowe M.L."/>
            <person name="Dalla E."/>
            <person name="Dalrymple B.P."/>
            <person name="de Bono B."/>
            <person name="Della Gatta G."/>
            <person name="di Bernardo D."/>
            <person name="Down T."/>
            <person name="Engstrom P."/>
            <person name="Fagiolini M."/>
            <person name="Faulkner G."/>
            <person name="Fletcher C.F."/>
            <person name="Fukushima T."/>
            <person name="Furuno M."/>
            <person name="Futaki S."/>
            <person name="Gariboldi M."/>
            <person name="Georgii-Hemming P."/>
            <person name="Gingeras T.R."/>
            <person name="Gojobori T."/>
            <person name="Green R.E."/>
            <person name="Gustincich S."/>
            <person name="Harbers M."/>
            <person name="Hayashi Y."/>
            <person name="Hensch T.K."/>
            <person name="Hirokawa N."/>
            <person name="Hill D."/>
            <person name="Huminiecki L."/>
            <person name="Iacono M."/>
            <person name="Ikeo K."/>
            <person name="Iwama A."/>
            <person name="Ishikawa T."/>
            <person name="Jakt M."/>
            <person name="Kanapin A."/>
            <person name="Katoh M."/>
            <person name="Kawasawa Y."/>
            <person name="Kelso J."/>
            <person name="Kitamura H."/>
            <person name="Kitano H."/>
            <person name="Kollias G."/>
            <person name="Krishnan S.P."/>
            <person name="Kruger A."/>
            <person name="Kummerfeld S.K."/>
            <person name="Kurochkin I.V."/>
            <person name="Lareau L.F."/>
            <person name="Lazarevic D."/>
            <person name="Lipovich L."/>
            <person name="Liu J."/>
            <person name="Liuni S."/>
            <person name="McWilliam S."/>
            <person name="Madan Babu M."/>
            <person name="Madera M."/>
            <person name="Marchionni L."/>
            <person name="Matsuda H."/>
            <person name="Matsuzawa S."/>
            <person name="Miki H."/>
            <person name="Mignone F."/>
            <person name="Miyake S."/>
            <person name="Morris K."/>
            <person name="Mottagui-Tabar S."/>
            <person name="Mulder N."/>
            <person name="Nakano N."/>
            <person name="Nakauchi H."/>
            <person name="Ng P."/>
            <person name="Nilsson R."/>
            <person name="Nishiguchi S."/>
            <person name="Nishikawa S."/>
            <person name="Nori F."/>
            <person name="Ohara O."/>
            <person name="Okazaki Y."/>
            <person name="Orlando V."/>
            <person name="Pang K.C."/>
            <person name="Pavan W.J."/>
            <person name="Pavesi G."/>
            <person name="Pesole G."/>
            <person name="Petrovsky N."/>
            <person name="Piazza S."/>
            <person name="Reed J."/>
            <person name="Reid J.F."/>
            <person name="Ring B.Z."/>
            <person name="Ringwald M."/>
            <person name="Rost B."/>
            <person name="Ruan Y."/>
            <person name="Salzberg S.L."/>
            <person name="Sandelin A."/>
            <person name="Schneider C."/>
            <person name="Schoenbach C."/>
            <person name="Sekiguchi K."/>
            <person name="Semple C.A."/>
            <person name="Seno S."/>
            <person name="Sessa L."/>
            <person name="Sheng Y."/>
            <person name="Shibata Y."/>
            <person name="Shimada H."/>
            <person name="Shimada K."/>
            <person name="Silva D."/>
            <person name="Sinclair B."/>
            <person name="Sperling S."/>
            <person name="Stupka E."/>
            <person name="Sugiura K."/>
            <person name="Sultana R."/>
            <person name="Takenaka Y."/>
            <person name="Taki K."/>
            <person name="Tammoja K."/>
            <person name="Tan S.L."/>
            <person name="Tang S."/>
            <person name="Taylor M.S."/>
            <person name="Tegner J."/>
            <person name="Teichmann S.A."/>
            <person name="Ueda H.R."/>
            <person name="van Nimwegen E."/>
            <person name="Verardo R."/>
            <person name="Wei C.L."/>
            <person name="Yagi K."/>
            <person name="Yamanishi H."/>
            <person name="Zabarovsky E."/>
            <person name="Zhu S."/>
            <person name="Zimmer A."/>
            <person name="Hide W."/>
            <person name="Bult C."/>
            <person name="Grimmond S.M."/>
            <person name="Teasdale R.D."/>
            <person name="Liu E.T."/>
            <person name="Brusic V."/>
            <person name="Quackenbush J."/>
            <person name="Wahlestedt C."/>
            <person name="Mattick J.S."/>
            <person name="Hume D.A."/>
            <person name="Kai C."/>
            <person name="Sasaki D."/>
            <person name="Tomaru Y."/>
            <person name="Fukuda S."/>
            <person name="Kanamori-Katayama M."/>
            <person name="Suzuki M."/>
            <person name="Aoki J."/>
            <person name="Arakawa T."/>
            <person name="Iida J."/>
            <person name="Imamura K."/>
            <person name="Itoh M."/>
            <person name="Kato T."/>
            <person name="Kawaji H."/>
            <person name="Kawagashira N."/>
            <person name="Kawashima T."/>
            <person name="Kojima M."/>
            <person name="Kondo S."/>
            <person name="Konno H."/>
            <person name="Nakano K."/>
            <person name="Ninomiya N."/>
            <person name="Nishio T."/>
            <person name="Okada M."/>
            <person name="Plessy C."/>
            <person name="Shibata K."/>
            <person name="Shiraki T."/>
            <person name="Suzuki S."/>
            <person name="Tagami M."/>
            <person name="Waki K."/>
            <person name="Watahiki A."/>
            <person name="Okamura-Oho Y."/>
            <person name="Suzuki H."/>
            <person name="Kawai J."/>
            <person name="Hayashizaki Y."/>
        </authorList>
    </citation>
    <scope>NUCLEOTIDE SEQUENCE [LARGE SCALE MRNA]</scope>
    <source>
        <strain>C57BL/6J</strain>
        <tissue>Bone marrow</tissue>
        <tissue>Mammary gland</tissue>
        <tissue>Skin</tissue>
    </source>
</reference>
<reference key="3">
    <citation type="journal article" date="2009" name="PLoS Biol.">
        <title>Lineage-specific biology revealed by a finished genome assembly of the mouse.</title>
        <authorList>
            <person name="Church D.M."/>
            <person name="Goodstadt L."/>
            <person name="Hillier L.W."/>
            <person name="Zody M.C."/>
            <person name="Goldstein S."/>
            <person name="She X."/>
            <person name="Bult C.J."/>
            <person name="Agarwala R."/>
            <person name="Cherry J.L."/>
            <person name="DiCuccio M."/>
            <person name="Hlavina W."/>
            <person name="Kapustin Y."/>
            <person name="Meric P."/>
            <person name="Maglott D."/>
            <person name="Birtle Z."/>
            <person name="Marques A.C."/>
            <person name="Graves T."/>
            <person name="Zhou S."/>
            <person name="Teague B."/>
            <person name="Potamousis K."/>
            <person name="Churas C."/>
            <person name="Place M."/>
            <person name="Herschleb J."/>
            <person name="Runnheim R."/>
            <person name="Forrest D."/>
            <person name="Amos-Landgraf J."/>
            <person name="Schwartz D.C."/>
            <person name="Cheng Z."/>
            <person name="Lindblad-Toh K."/>
            <person name="Eichler E.E."/>
            <person name="Ponting C.P."/>
        </authorList>
    </citation>
    <scope>NUCLEOTIDE SEQUENCE [LARGE SCALE GENOMIC DNA]</scope>
    <source>
        <strain>C57BL/6J</strain>
    </source>
</reference>
<reference key="4">
    <citation type="journal article" date="2004" name="Genome Res.">
        <title>The status, quality, and expansion of the NIH full-length cDNA project: the Mammalian Gene Collection (MGC).</title>
        <authorList>
            <consortium name="The MGC Project Team"/>
        </authorList>
    </citation>
    <scope>NUCLEOTIDE SEQUENCE [LARGE SCALE MRNA]</scope>
    <source>
        <tissue>Mammary tumor</tissue>
    </source>
</reference>
<reference key="5">
    <citation type="journal article" date="2010" name="Cell">
        <title>A tissue-specific atlas of mouse protein phosphorylation and expression.</title>
        <authorList>
            <person name="Huttlin E.L."/>
            <person name="Jedrychowski M.P."/>
            <person name="Elias J.E."/>
            <person name="Goswami T."/>
            <person name="Rad R."/>
            <person name="Beausoleil S.A."/>
            <person name="Villen J."/>
            <person name="Haas W."/>
            <person name="Sowa M.E."/>
            <person name="Gygi S.P."/>
        </authorList>
    </citation>
    <scope>IDENTIFICATION BY MASS SPECTROMETRY [LARGE SCALE ANALYSIS]</scope>
    <source>
        <tissue>Brain</tissue>
        <tissue>Brown adipose tissue</tissue>
        <tissue>Heart</tissue>
        <tissue>Kidney</tissue>
        <tissue>Liver</tissue>
        <tissue>Lung</tissue>
        <tissue>Pancreas</tissue>
        <tissue>Spleen</tissue>
        <tissue>Testis</tissue>
    </source>
</reference>
<reference key="6">
    <citation type="journal article" date="2013" name="Mol. Cell">
        <title>SIRT5-mediated lysine desuccinylation impacts diverse metabolic pathways.</title>
        <authorList>
            <person name="Park J."/>
            <person name="Chen Y."/>
            <person name="Tishkoff D.X."/>
            <person name="Peng C."/>
            <person name="Tan M."/>
            <person name="Dai L."/>
            <person name="Xie Z."/>
            <person name="Zhang Y."/>
            <person name="Zwaans B.M."/>
            <person name="Skinner M.E."/>
            <person name="Lombard D.B."/>
            <person name="Zhao Y."/>
        </authorList>
    </citation>
    <scope>ACETYLATION [LARGE SCALE ANALYSIS] AT LYS-564</scope>
    <scope>IDENTIFICATION BY MASS SPECTROMETRY [LARGE SCALE ANALYSIS]</scope>
    <source>
        <tissue>Embryonic fibroblast</tissue>
    </source>
</reference>
<sequence length="767" mass="86437">MATYLEFIQQNEERDGVRFSWNVWPSSRLEATRMVVPLACLLTPLKERPDLPPVQYEPVLCSRPTCKAILNPLCQVDYRAKLWACNFCFQRNQFPPAYAGISEVNQPAELMPQFSTIEYMIQRGARSPLIFLYVVDTCLEEDDLQALKESLQMSLSLLPPDALVGLITFGRMVQVHELSCEGISKSYVFRGTKDLTAKQIQEMLGLTKSAMPVQQARPAQPQEQPFVSSRFLQPIHKIDMNLTDLLGELQRDPWPVTQGKRPLRSTGVALSIAVGLLEGTFPNTGARIMLFTGGPPTQGPGMVVGDELKTPIRSWHDIEKDNARFMKKATKHYEMLANRTATNGHCIDIYACALDQTGLLEMKCCPNLTGGHMVMGDSFNTSLFKQTFQRIFSKDFNGDFRMAFGATLDVKTSRELKIAGAIGPCVSLNVKGPCVSENELGVGGTSQWKICGLDPSSTLGIYFEVVNQHNAPVPQGGRGAIQFVTQYQHSSTQKRIRVTTIARNWADAQSQLRHIEAAFDQEAAAVLMARLGVFRAESEEGPDVLRWLDRQLIRLCQKFGQYNKEDPTSFRLSDSFSLYPQFMFHLRRSPFLQVFNNSPDESSYYRHHFARQDLTQSLIMIQPILYSYSFHGPPEPVLLDSSSILADRILLMDTFFQIVIYLGETIAQWRKAGYQDMPEYENFKHLLQAPLDDAQEILQARFPMPRYINTEHGGSQARFLLSKVNPSQTHNNLYAWGQETGAPILTDDVSLQVFMDHLKKLAVSSAS</sequence>
<evidence type="ECO:0000250" key="1">
    <source>
        <dbReference type="UniProtKB" id="Q15436"/>
    </source>
</evidence>
<evidence type="ECO:0000250" key="2">
    <source>
        <dbReference type="UniProtKB" id="Q15437"/>
    </source>
</evidence>
<evidence type="ECO:0000255" key="3"/>
<evidence type="ECO:0000305" key="4"/>
<evidence type="ECO:0000312" key="5">
    <source>
        <dbReference type="MGI" id="MGI:1350925"/>
    </source>
</evidence>
<evidence type="ECO:0007744" key="6">
    <source>
    </source>
</evidence>
<keyword id="KW-0007">Acetylation</keyword>
<keyword id="KW-0963">Cytoplasm</keyword>
<keyword id="KW-0968">Cytoplasmic vesicle</keyword>
<keyword id="KW-0256">Endoplasmic reticulum</keyword>
<keyword id="KW-0931">ER-Golgi transport</keyword>
<keyword id="KW-0472">Membrane</keyword>
<keyword id="KW-0479">Metal-binding</keyword>
<keyword id="KW-0653">Protein transport</keyword>
<keyword id="KW-1185">Reference proteome</keyword>
<keyword id="KW-0813">Transport</keyword>
<keyword id="KW-0862">Zinc</keyword>
<feature type="initiator methionine" description="Removed" evidence="2">
    <location>
        <position position="1"/>
    </location>
</feature>
<feature type="chain" id="PRO_0000205149" description="Protein transport protein Sec23B">
    <location>
        <begin position="2"/>
        <end position="767"/>
    </location>
</feature>
<feature type="repeat" description="Gelsolin-like" evidence="3">
    <location>
        <begin position="634"/>
        <end position="720"/>
    </location>
</feature>
<feature type="binding site" evidence="1">
    <location>
        <position position="61"/>
    </location>
    <ligand>
        <name>Zn(2+)</name>
        <dbReference type="ChEBI" id="CHEBI:29105"/>
    </ligand>
</feature>
<feature type="binding site" evidence="1">
    <location>
        <position position="66"/>
    </location>
    <ligand>
        <name>Zn(2+)</name>
        <dbReference type="ChEBI" id="CHEBI:29105"/>
    </ligand>
</feature>
<feature type="binding site" evidence="1">
    <location>
        <position position="85"/>
    </location>
    <ligand>
        <name>Zn(2+)</name>
        <dbReference type="ChEBI" id="CHEBI:29105"/>
    </ligand>
</feature>
<feature type="binding site" evidence="1">
    <location>
        <position position="88"/>
    </location>
    <ligand>
        <name>Zn(2+)</name>
        <dbReference type="ChEBI" id="CHEBI:29105"/>
    </ligand>
</feature>
<feature type="modified residue" description="N-acetylalanine" evidence="2">
    <location>
        <position position="2"/>
    </location>
</feature>
<feature type="modified residue" description="N6-acetyllysine" evidence="6">
    <location>
        <position position="564"/>
    </location>
</feature>
<feature type="sequence conflict" description="In Ref. 1; AAF08301." evidence="4" ref="1">
    <original>S</original>
    <variation>W</variation>
    <location>
        <position position="314"/>
    </location>
</feature>
<feature type="sequence conflict" description="In Ref. 1; AAF08301." evidence="4" ref="1">
    <original>SL</original>
    <variation>CV</variation>
    <location>
        <begin position="382"/>
        <end position="383"/>
    </location>
</feature>
<feature type="sequence conflict" description="In Ref. 4; AAH05464." evidence="4" ref="4">
    <original>A</original>
    <variation>T</variation>
    <location>
        <position position="536"/>
    </location>
</feature>
<feature type="sequence conflict" description="In Ref. 1; AAF08301." evidence="4" ref="1">
    <original>F</original>
    <variation>L</variation>
    <location>
        <position position="702"/>
    </location>
</feature>
<name>SC23B_MOUSE</name>
<accession>Q9D662</accession>
<accession>A2ANA1</accession>
<accession>Q3U6B3</accession>
<accession>Q99K49</accession>
<accession>Q9QZ68</accession>
<comment type="function">
    <text evidence="1">Component of the coat protein complex II (COPII) which promotes the formation of transport vesicles from the endoplasmic reticulum (ER). The coat has two main functions, the physical deformation of the endoplasmic reticulum membrane into vesicles and the selection of cargo molecules for their transport to the Golgi complex.</text>
</comment>
<comment type="subunit">
    <text evidence="1 2">COPII is composed of at least five proteins: the Sec23/24 complex, the Sec13/31 complex and Sar1 (By similarity). Interacts with SAR1A (By similarity).</text>
</comment>
<comment type="subcellular location">
    <subcellularLocation>
        <location evidence="1">Cytoplasmic vesicle</location>
        <location evidence="1">COPII-coated vesicle membrane</location>
        <topology evidence="1">Peripheral membrane protein</topology>
        <orientation evidence="1">Cytoplasmic side</orientation>
    </subcellularLocation>
    <subcellularLocation>
        <location evidence="2">Endoplasmic reticulum membrane</location>
        <topology evidence="1">Peripheral membrane protein</topology>
        <orientation evidence="1">Cytoplasmic side</orientation>
    </subcellularLocation>
    <subcellularLocation>
        <location evidence="1">Cytoplasm</location>
        <location evidence="1">Cytosol</location>
    </subcellularLocation>
</comment>
<comment type="similarity">
    <text evidence="4">Belongs to the SEC23/SEC24 family. SEC23 subfamily.</text>
</comment>